<protein>
    <recommendedName>
        <fullName evidence="1">tRNA (guanine-N(1)-)-methyltransferase</fullName>
        <ecNumber evidence="1">2.1.1.228</ecNumber>
    </recommendedName>
    <alternativeName>
        <fullName evidence="1">M1G-methyltransferase</fullName>
    </alternativeName>
    <alternativeName>
        <fullName evidence="1">tRNA [GM37] methyltransferase</fullName>
    </alternativeName>
</protein>
<dbReference type="EC" id="2.1.1.228" evidence="1"/>
<dbReference type="EMBL" id="CP001096">
    <property type="protein sequence ID" value="ACE98803.1"/>
    <property type="molecule type" value="Genomic_DNA"/>
</dbReference>
<dbReference type="RefSeq" id="WP_012494006.1">
    <property type="nucleotide sequence ID" value="NC_011004.1"/>
</dbReference>
<dbReference type="SMR" id="B3Q854"/>
<dbReference type="KEGG" id="rpt:Rpal_0243"/>
<dbReference type="HOGENOM" id="CLU_047363_0_1_5"/>
<dbReference type="OrthoDB" id="9807416at2"/>
<dbReference type="Proteomes" id="UP000001725">
    <property type="component" value="Chromosome"/>
</dbReference>
<dbReference type="GO" id="GO:0005829">
    <property type="term" value="C:cytosol"/>
    <property type="evidence" value="ECO:0007669"/>
    <property type="project" value="TreeGrafter"/>
</dbReference>
<dbReference type="GO" id="GO:0052906">
    <property type="term" value="F:tRNA (guanine(37)-N1)-methyltransferase activity"/>
    <property type="evidence" value="ECO:0007669"/>
    <property type="project" value="UniProtKB-UniRule"/>
</dbReference>
<dbReference type="GO" id="GO:0002939">
    <property type="term" value="P:tRNA N1-guanine methylation"/>
    <property type="evidence" value="ECO:0007669"/>
    <property type="project" value="TreeGrafter"/>
</dbReference>
<dbReference type="CDD" id="cd18080">
    <property type="entry name" value="TrmD-like"/>
    <property type="match status" value="1"/>
</dbReference>
<dbReference type="FunFam" id="3.40.1280.10:FF:000001">
    <property type="entry name" value="tRNA (guanine-N(1)-)-methyltransferase"/>
    <property type="match status" value="1"/>
</dbReference>
<dbReference type="Gene3D" id="3.40.1280.10">
    <property type="match status" value="1"/>
</dbReference>
<dbReference type="Gene3D" id="1.10.1270.20">
    <property type="entry name" value="tRNA(m1g37)methyltransferase, domain 2"/>
    <property type="match status" value="1"/>
</dbReference>
<dbReference type="HAMAP" id="MF_00605">
    <property type="entry name" value="TrmD"/>
    <property type="match status" value="1"/>
</dbReference>
<dbReference type="InterPro" id="IPR029028">
    <property type="entry name" value="Alpha/beta_knot_MTases"/>
</dbReference>
<dbReference type="InterPro" id="IPR023148">
    <property type="entry name" value="tRNA_m1G_MeTrfase_C_sf"/>
</dbReference>
<dbReference type="InterPro" id="IPR002649">
    <property type="entry name" value="tRNA_m1G_MeTrfase_TrmD"/>
</dbReference>
<dbReference type="InterPro" id="IPR029026">
    <property type="entry name" value="tRNA_m1G_MTases_N"/>
</dbReference>
<dbReference type="InterPro" id="IPR016009">
    <property type="entry name" value="tRNA_MeTrfase_TRMD/TRM10"/>
</dbReference>
<dbReference type="NCBIfam" id="NF000648">
    <property type="entry name" value="PRK00026.1"/>
    <property type="match status" value="1"/>
</dbReference>
<dbReference type="NCBIfam" id="TIGR00088">
    <property type="entry name" value="trmD"/>
    <property type="match status" value="1"/>
</dbReference>
<dbReference type="PANTHER" id="PTHR46417">
    <property type="entry name" value="TRNA (GUANINE-N(1)-)-METHYLTRANSFERASE"/>
    <property type="match status" value="1"/>
</dbReference>
<dbReference type="PANTHER" id="PTHR46417:SF1">
    <property type="entry name" value="TRNA (GUANINE-N(1)-)-METHYLTRANSFERASE"/>
    <property type="match status" value="1"/>
</dbReference>
<dbReference type="Pfam" id="PF01746">
    <property type="entry name" value="tRNA_m1G_MT"/>
    <property type="match status" value="1"/>
</dbReference>
<dbReference type="PIRSF" id="PIRSF000386">
    <property type="entry name" value="tRNA_mtase"/>
    <property type="match status" value="1"/>
</dbReference>
<dbReference type="SUPFAM" id="SSF75217">
    <property type="entry name" value="alpha/beta knot"/>
    <property type="match status" value="1"/>
</dbReference>
<gene>
    <name evidence="1" type="primary">trmD</name>
    <name type="ordered locus">Rpal_0243</name>
</gene>
<name>TRMD_RHOPT</name>
<evidence type="ECO:0000255" key="1">
    <source>
        <dbReference type="HAMAP-Rule" id="MF_00605"/>
    </source>
</evidence>
<evidence type="ECO:0000256" key="2">
    <source>
        <dbReference type="SAM" id="MobiDB-lite"/>
    </source>
</evidence>
<organism>
    <name type="scientific">Rhodopseudomonas palustris (strain TIE-1)</name>
    <dbReference type="NCBI Taxonomy" id="395960"/>
    <lineage>
        <taxon>Bacteria</taxon>
        <taxon>Pseudomonadati</taxon>
        <taxon>Pseudomonadota</taxon>
        <taxon>Alphaproteobacteria</taxon>
        <taxon>Hyphomicrobiales</taxon>
        <taxon>Nitrobacteraceae</taxon>
        <taxon>Rhodopseudomonas</taxon>
    </lineage>
</organism>
<keyword id="KW-0963">Cytoplasm</keyword>
<keyword id="KW-0489">Methyltransferase</keyword>
<keyword id="KW-0949">S-adenosyl-L-methionine</keyword>
<keyword id="KW-0808">Transferase</keyword>
<keyword id="KW-0819">tRNA processing</keyword>
<reference key="1">
    <citation type="submission" date="2008-05" db="EMBL/GenBank/DDBJ databases">
        <title>Complete sequence of Rhodopseudomonas palustris TIE-1.</title>
        <authorList>
            <consortium name="US DOE Joint Genome Institute"/>
            <person name="Lucas S."/>
            <person name="Copeland A."/>
            <person name="Lapidus A."/>
            <person name="Glavina del Rio T."/>
            <person name="Dalin E."/>
            <person name="Tice H."/>
            <person name="Pitluck S."/>
            <person name="Chain P."/>
            <person name="Malfatti S."/>
            <person name="Shin M."/>
            <person name="Vergez L."/>
            <person name="Lang D."/>
            <person name="Schmutz J."/>
            <person name="Larimer F."/>
            <person name="Land M."/>
            <person name="Hauser L."/>
            <person name="Kyrpides N."/>
            <person name="Mikhailova N."/>
            <person name="Emerson D."/>
            <person name="Newman D.K."/>
            <person name="Roden E."/>
            <person name="Richardson P."/>
        </authorList>
    </citation>
    <scope>NUCLEOTIDE SEQUENCE [LARGE SCALE GENOMIC DNA]</scope>
    <source>
        <strain>TIE-1</strain>
    </source>
</reference>
<comment type="function">
    <text evidence="1">Specifically methylates guanosine-37 in various tRNAs.</text>
</comment>
<comment type="catalytic activity">
    <reaction evidence="1">
        <text>guanosine(37) in tRNA + S-adenosyl-L-methionine = N(1)-methylguanosine(37) in tRNA + S-adenosyl-L-homocysteine + H(+)</text>
        <dbReference type="Rhea" id="RHEA:36899"/>
        <dbReference type="Rhea" id="RHEA-COMP:10145"/>
        <dbReference type="Rhea" id="RHEA-COMP:10147"/>
        <dbReference type="ChEBI" id="CHEBI:15378"/>
        <dbReference type="ChEBI" id="CHEBI:57856"/>
        <dbReference type="ChEBI" id="CHEBI:59789"/>
        <dbReference type="ChEBI" id="CHEBI:73542"/>
        <dbReference type="ChEBI" id="CHEBI:74269"/>
        <dbReference type="EC" id="2.1.1.228"/>
    </reaction>
</comment>
<comment type="subunit">
    <text evidence="1">Homodimer.</text>
</comment>
<comment type="subcellular location">
    <subcellularLocation>
        <location evidence="1">Cytoplasm</location>
    </subcellularLocation>
</comment>
<comment type="similarity">
    <text evidence="1">Belongs to the RNA methyltransferase TrmD family.</text>
</comment>
<accession>B3Q854</accession>
<sequence length="248" mass="26307">MTWRATVLTLFPEMFPGPLGVSLAGRALASGLWGLEARDIRDSATDRHRSVDDTPAGGGPGMVLRADVLAAAIDAVDAAADRPRLVMSPRGRPLTQARVAELAAGPGPLIVCGRFEGIDQRVIDARGLEEVSIGDYVLSGGEIAAMALIDACVRLLPGVMGKLESSTDESFSAGLLEYPQYTRPQTFEGRAIPEVLLSGDHGKVAAWRLGEAEALTKARRPDLWAARPAQTIRAKGESQKTPKNKTDG</sequence>
<proteinExistence type="inferred from homology"/>
<feature type="chain" id="PRO_1000130199" description="tRNA (guanine-N(1)-)-methyltransferase">
    <location>
        <begin position="1"/>
        <end position="248"/>
    </location>
</feature>
<feature type="region of interest" description="Disordered" evidence="2">
    <location>
        <begin position="227"/>
        <end position="248"/>
    </location>
</feature>
<feature type="compositionally biased region" description="Basic and acidic residues" evidence="2">
    <location>
        <begin position="234"/>
        <end position="248"/>
    </location>
</feature>
<feature type="binding site" evidence="1">
    <location>
        <position position="113"/>
    </location>
    <ligand>
        <name>S-adenosyl-L-methionine</name>
        <dbReference type="ChEBI" id="CHEBI:59789"/>
    </ligand>
</feature>
<feature type="binding site" evidence="1">
    <location>
        <begin position="133"/>
        <end position="138"/>
    </location>
    <ligand>
        <name>S-adenosyl-L-methionine</name>
        <dbReference type="ChEBI" id="CHEBI:59789"/>
    </ligand>
</feature>